<dbReference type="EMBL" id="CP000142">
    <property type="protein sequence ID" value="ABA87842.1"/>
    <property type="molecule type" value="Genomic_DNA"/>
</dbReference>
<dbReference type="RefSeq" id="WP_011340283.1">
    <property type="nucleotide sequence ID" value="NC_007498.2"/>
</dbReference>
<dbReference type="SMR" id="Q3A709"/>
<dbReference type="STRING" id="338963.Pcar_0583"/>
<dbReference type="KEGG" id="pca:Pcar_0583"/>
<dbReference type="eggNOG" id="COG4108">
    <property type="taxonomic scope" value="Bacteria"/>
</dbReference>
<dbReference type="HOGENOM" id="CLU_002794_2_1_7"/>
<dbReference type="OrthoDB" id="9801591at2"/>
<dbReference type="Proteomes" id="UP000002534">
    <property type="component" value="Chromosome"/>
</dbReference>
<dbReference type="GO" id="GO:0005829">
    <property type="term" value="C:cytosol"/>
    <property type="evidence" value="ECO:0007669"/>
    <property type="project" value="TreeGrafter"/>
</dbReference>
<dbReference type="GO" id="GO:0005525">
    <property type="term" value="F:GTP binding"/>
    <property type="evidence" value="ECO:0007669"/>
    <property type="project" value="UniProtKB-UniRule"/>
</dbReference>
<dbReference type="GO" id="GO:0003924">
    <property type="term" value="F:GTPase activity"/>
    <property type="evidence" value="ECO:0007669"/>
    <property type="project" value="InterPro"/>
</dbReference>
<dbReference type="GO" id="GO:0016150">
    <property type="term" value="F:translation release factor activity, codon nonspecific"/>
    <property type="evidence" value="ECO:0007669"/>
    <property type="project" value="TreeGrafter"/>
</dbReference>
<dbReference type="GO" id="GO:0016149">
    <property type="term" value="F:translation release factor activity, codon specific"/>
    <property type="evidence" value="ECO:0007669"/>
    <property type="project" value="UniProtKB-UniRule"/>
</dbReference>
<dbReference type="GO" id="GO:0006449">
    <property type="term" value="P:regulation of translational termination"/>
    <property type="evidence" value="ECO:0007669"/>
    <property type="project" value="UniProtKB-UniRule"/>
</dbReference>
<dbReference type="CDD" id="cd04169">
    <property type="entry name" value="RF3"/>
    <property type="match status" value="1"/>
</dbReference>
<dbReference type="CDD" id="cd03689">
    <property type="entry name" value="RF3_II"/>
    <property type="match status" value="1"/>
</dbReference>
<dbReference type="CDD" id="cd16259">
    <property type="entry name" value="RF3_III"/>
    <property type="match status" value="1"/>
</dbReference>
<dbReference type="FunFam" id="2.40.30.10:FF:000040">
    <property type="entry name" value="Peptide chain release factor 3"/>
    <property type="match status" value="1"/>
</dbReference>
<dbReference type="FunFam" id="3.30.70.3280:FF:000001">
    <property type="entry name" value="Peptide chain release factor 3"/>
    <property type="match status" value="1"/>
</dbReference>
<dbReference type="FunFam" id="3.40.50.300:FF:000542">
    <property type="entry name" value="Peptide chain release factor 3"/>
    <property type="match status" value="1"/>
</dbReference>
<dbReference type="Gene3D" id="3.40.50.300">
    <property type="entry name" value="P-loop containing nucleotide triphosphate hydrolases"/>
    <property type="match status" value="1"/>
</dbReference>
<dbReference type="Gene3D" id="3.30.70.3280">
    <property type="entry name" value="Peptide chain release factor 3, domain III"/>
    <property type="match status" value="1"/>
</dbReference>
<dbReference type="Gene3D" id="2.40.30.10">
    <property type="entry name" value="Translation factors"/>
    <property type="match status" value="1"/>
</dbReference>
<dbReference type="HAMAP" id="MF_00072">
    <property type="entry name" value="Rel_fac_3"/>
    <property type="match status" value="1"/>
</dbReference>
<dbReference type="InterPro" id="IPR053905">
    <property type="entry name" value="EF-G-like_DII"/>
</dbReference>
<dbReference type="InterPro" id="IPR035647">
    <property type="entry name" value="EFG_III/V"/>
</dbReference>
<dbReference type="InterPro" id="IPR031157">
    <property type="entry name" value="G_TR_CS"/>
</dbReference>
<dbReference type="InterPro" id="IPR027417">
    <property type="entry name" value="P-loop_NTPase"/>
</dbReference>
<dbReference type="InterPro" id="IPR004548">
    <property type="entry name" value="PrfC"/>
</dbReference>
<dbReference type="InterPro" id="IPR032090">
    <property type="entry name" value="RF3_C"/>
</dbReference>
<dbReference type="InterPro" id="IPR038467">
    <property type="entry name" value="RF3_dom_3_sf"/>
</dbReference>
<dbReference type="InterPro" id="IPR041732">
    <property type="entry name" value="RF3_GTP-bd"/>
</dbReference>
<dbReference type="InterPro" id="IPR005225">
    <property type="entry name" value="Small_GTP-bd"/>
</dbReference>
<dbReference type="InterPro" id="IPR000795">
    <property type="entry name" value="T_Tr_GTP-bd_dom"/>
</dbReference>
<dbReference type="InterPro" id="IPR009000">
    <property type="entry name" value="Transl_B-barrel_sf"/>
</dbReference>
<dbReference type="NCBIfam" id="TIGR00503">
    <property type="entry name" value="prfC"/>
    <property type="match status" value="1"/>
</dbReference>
<dbReference type="NCBIfam" id="NF001964">
    <property type="entry name" value="PRK00741.1"/>
    <property type="match status" value="1"/>
</dbReference>
<dbReference type="NCBIfam" id="TIGR00231">
    <property type="entry name" value="small_GTP"/>
    <property type="match status" value="1"/>
</dbReference>
<dbReference type="PANTHER" id="PTHR43556">
    <property type="entry name" value="PEPTIDE CHAIN RELEASE FACTOR RF3"/>
    <property type="match status" value="1"/>
</dbReference>
<dbReference type="PANTHER" id="PTHR43556:SF2">
    <property type="entry name" value="PEPTIDE CHAIN RELEASE FACTOR RF3"/>
    <property type="match status" value="1"/>
</dbReference>
<dbReference type="Pfam" id="PF22042">
    <property type="entry name" value="EF-G_D2"/>
    <property type="match status" value="1"/>
</dbReference>
<dbReference type="Pfam" id="PF00009">
    <property type="entry name" value="GTP_EFTU"/>
    <property type="match status" value="1"/>
</dbReference>
<dbReference type="Pfam" id="PF16658">
    <property type="entry name" value="RF3_C"/>
    <property type="match status" value="1"/>
</dbReference>
<dbReference type="PRINTS" id="PR00315">
    <property type="entry name" value="ELONGATNFCT"/>
</dbReference>
<dbReference type="SUPFAM" id="SSF54980">
    <property type="entry name" value="EF-G C-terminal domain-like"/>
    <property type="match status" value="1"/>
</dbReference>
<dbReference type="SUPFAM" id="SSF52540">
    <property type="entry name" value="P-loop containing nucleoside triphosphate hydrolases"/>
    <property type="match status" value="1"/>
</dbReference>
<dbReference type="SUPFAM" id="SSF50447">
    <property type="entry name" value="Translation proteins"/>
    <property type="match status" value="1"/>
</dbReference>
<dbReference type="PROSITE" id="PS00301">
    <property type="entry name" value="G_TR_1"/>
    <property type="match status" value="1"/>
</dbReference>
<dbReference type="PROSITE" id="PS51722">
    <property type="entry name" value="G_TR_2"/>
    <property type="match status" value="1"/>
</dbReference>
<protein>
    <recommendedName>
        <fullName evidence="1">Peptide chain release factor 3</fullName>
        <shortName evidence="1">RF-3</shortName>
    </recommendedName>
</protein>
<keyword id="KW-0963">Cytoplasm</keyword>
<keyword id="KW-0342">GTP-binding</keyword>
<keyword id="KW-0547">Nucleotide-binding</keyword>
<keyword id="KW-0648">Protein biosynthesis</keyword>
<keyword id="KW-1185">Reference proteome</keyword>
<accession>Q3A709</accession>
<organism>
    <name type="scientific">Syntrophotalea carbinolica (strain DSM 2380 / NBRC 103641 / GraBd1)</name>
    <name type="common">Pelobacter carbinolicus</name>
    <dbReference type="NCBI Taxonomy" id="338963"/>
    <lineage>
        <taxon>Bacteria</taxon>
        <taxon>Pseudomonadati</taxon>
        <taxon>Thermodesulfobacteriota</taxon>
        <taxon>Desulfuromonadia</taxon>
        <taxon>Desulfuromonadales</taxon>
        <taxon>Syntrophotaleaceae</taxon>
        <taxon>Syntrophotalea</taxon>
    </lineage>
</organism>
<comment type="function">
    <text evidence="1">Increases the formation of ribosomal termination complexes and stimulates activities of RF-1 and RF-2. It binds guanine nucleotides and has strong preference for UGA stop codons. It may interact directly with the ribosome. The stimulation of RF-1 and RF-2 is significantly reduced by GTP and GDP, but not by GMP.</text>
</comment>
<comment type="subcellular location">
    <subcellularLocation>
        <location evidence="1">Cytoplasm</location>
    </subcellularLocation>
</comment>
<comment type="similarity">
    <text evidence="1">Belongs to the TRAFAC class translation factor GTPase superfamily. Classic translation factor GTPase family. PrfC subfamily.</text>
</comment>
<sequence>MSKNHRKEVDRRRTFGIISHPDAGKTTLTEKLLLFGGAIQMAGAVKARKAARHATSDWMAMEQERGISVTSSVMKFNYRDYEINLLDTPGHQDFSEDTYRVLTAVDSALMVIDSAKGVETQTRKLMEVCRMRNTPIMTFINKLDREGLEPLDLLADIEETLQIECAPLSWPIGMGKRFKGTYNLYRKQLCLFMAGQETRPQDMLVIEDLDDPRLDELLGSQADQLREDIELLEGAANPFEPEEYLKGNQTPVFFGSAINNFGVQEMLDAFVEQAPVPRPAPTTTREISPYEEDFSGFVFKIQANMDPAHRDRIAFFRICSGTFHRGMKVRHHRIGKDVNIANATIFMAQDRANVEEAFPGDIIGIHNHGTIKIGDTFTDKEPLKFTGIPSFAPEHFRRVRLKNPLKSKQLEKGLIQLAEEGAVQLFRPLFNTDYILGAVGVLQFDVIMSRLKNEYSVDAIYEGVEYATARWVECDDRKVLEEFEKKCQVNLAYDAEGNLTYLASSEWRLGHTMEQWPQVVFHKTREHN</sequence>
<gene>
    <name evidence="1" type="primary">prfC</name>
    <name type="ordered locus">Pcar_0583</name>
</gene>
<reference key="1">
    <citation type="submission" date="2005-10" db="EMBL/GenBank/DDBJ databases">
        <title>Complete sequence of Pelobacter carbinolicus DSM 2380.</title>
        <authorList>
            <person name="Copeland A."/>
            <person name="Lucas S."/>
            <person name="Lapidus A."/>
            <person name="Barry K."/>
            <person name="Detter J.C."/>
            <person name="Glavina T."/>
            <person name="Hammon N."/>
            <person name="Israni S."/>
            <person name="Pitluck S."/>
            <person name="Chertkov O."/>
            <person name="Schmutz J."/>
            <person name="Larimer F."/>
            <person name="Land M."/>
            <person name="Kyrpides N."/>
            <person name="Ivanova N."/>
            <person name="Richardson P."/>
        </authorList>
    </citation>
    <scope>NUCLEOTIDE SEQUENCE [LARGE SCALE GENOMIC DNA]</scope>
    <source>
        <strain>DSM 2380 / NBRC 103641 / GraBd1</strain>
    </source>
</reference>
<name>RF3_SYNC1</name>
<evidence type="ECO:0000255" key="1">
    <source>
        <dbReference type="HAMAP-Rule" id="MF_00072"/>
    </source>
</evidence>
<proteinExistence type="inferred from homology"/>
<feature type="chain" id="PRO_0000242194" description="Peptide chain release factor 3">
    <location>
        <begin position="1"/>
        <end position="528"/>
    </location>
</feature>
<feature type="domain" description="tr-type G">
    <location>
        <begin position="10"/>
        <end position="278"/>
    </location>
</feature>
<feature type="binding site" evidence="1">
    <location>
        <begin position="19"/>
        <end position="26"/>
    </location>
    <ligand>
        <name>GTP</name>
        <dbReference type="ChEBI" id="CHEBI:37565"/>
    </ligand>
</feature>
<feature type="binding site" evidence="1">
    <location>
        <begin position="87"/>
        <end position="91"/>
    </location>
    <ligand>
        <name>GTP</name>
        <dbReference type="ChEBI" id="CHEBI:37565"/>
    </ligand>
</feature>
<feature type="binding site" evidence="1">
    <location>
        <begin position="141"/>
        <end position="144"/>
    </location>
    <ligand>
        <name>GTP</name>
        <dbReference type="ChEBI" id="CHEBI:37565"/>
    </ligand>
</feature>